<feature type="chain" id="PRO_1000083390" description="Large ribosomal subunit protein uL11">
    <location>
        <begin position="1"/>
        <end position="141"/>
    </location>
</feature>
<gene>
    <name evidence="1" type="primary">rplK</name>
    <name evidence="1" type="synonym">rpl11</name>
    <name type="ordered locus">MAE_36620</name>
</gene>
<comment type="function">
    <text evidence="1">Forms part of the ribosomal stalk which helps the ribosome interact with GTP-bound translation factors.</text>
</comment>
<comment type="subunit">
    <text evidence="1">Part of the ribosomal stalk of the 50S ribosomal subunit. Interacts with L10 and the large rRNA to form the base of the stalk. L10 forms an elongated spine to which L12 dimers bind in a sequential fashion forming a multimeric L10(L12)X complex.</text>
</comment>
<comment type="PTM">
    <text evidence="1">One or more lysine residues are methylated.</text>
</comment>
<comment type="similarity">
    <text evidence="1">Belongs to the universal ribosomal protein uL11 family.</text>
</comment>
<evidence type="ECO:0000255" key="1">
    <source>
        <dbReference type="HAMAP-Rule" id="MF_00736"/>
    </source>
</evidence>
<evidence type="ECO:0000305" key="2"/>
<reference key="1">
    <citation type="journal article" date="2007" name="DNA Res.">
        <title>Complete genomic structure of the bloom-forming toxic cyanobacterium Microcystis aeruginosa NIES-843.</title>
        <authorList>
            <person name="Kaneko T."/>
            <person name="Nakajima N."/>
            <person name="Okamoto S."/>
            <person name="Suzuki I."/>
            <person name="Tanabe Y."/>
            <person name="Tamaoki M."/>
            <person name="Nakamura Y."/>
            <person name="Kasai F."/>
            <person name="Watanabe A."/>
            <person name="Kawashima K."/>
            <person name="Kishida Y."/>
            <person name="Ono A."/>
            <person name="Shimizu Y."/>
            <person name="Takahashi C."/>
            <person name="Minami C."/>
            <person name="Fujishiro T."/>
            <person name="Kohara M."/>
            <person name="Katoh M."/>
            <person name="Nakazaki N."/>
            <person name="Nakayama S."/>
            <person name="Yamada M."/>
            <person name="Tabata S."/>
            <person name="Watanabe M.M."/>
        </authorList>
    </citation>
    <scope>NUCLEOTIDE SEQUENCE [LARGE SCALE GENOMIC DNA]</scope>
    <source>
        <strain>NIES-843 / IAM M-247</strain>
    </source>
</reference>
<organism>
    <name type="scientific">Microcystis aeruginosa (strain NIES-843 / IAM M-2473)</name>
    <dbReference type="NCBI Taxonomy" id="449447"/>
    <lineage>
        <taxon>Bacteria</taxon>
        <taxon>Bacillati</taxon>
        <taxon>Cyanobacteriota</taxon>
        <taxon>Cyanophyceae</taxon>
        <taxon>Oscillatoriophycideae</taxon>
        <taxon>Chroococcales</taxon>
        <taxon>Microcystaceae</taxon>
        <taxon>Microcystis</taxon>
    </lineage>
</organism>
<dbReference type="EMBL" id="AP009552">
    <property type="protein sequence ID" value="BAG03484.1"/>
    <property type="molecule type" value="Genomic_DNA"/>
</dbReference>
<dbReference type="RefSeq" id="WP_002735897.1">
    <property type="nucleotide sequence ID" value="NC_010296.1"/>
</dbReference>
<dbReference type="SMR" id="B0JNQ4"/>
<dbReference type="STRING" id="449447.MAE_36620"/>
<dbReference type="PaxDb" id="449447-MAE_36620"/>
<dbReference type="EnsemblBacteria" id="BAG03484">
    <property type="protein sequence ID" value="BAG03484"/>
    <property type="gene ID" value="MAE_36620"/>
</dbReference>
<dbReference type="KEGG" id="mar:MAE_36620"/>
<dbReference type="eggNOG" id="COG0080">
    <property type="taxonomic scope" value="Bacteria"/>
</dbReference>
<dbReference type="HOGENOM" id="CLU_074237_2_2_3"/>
<dbReference type="BioCyc" id="MAER449447:MAE_RS15860-MONOMER"/>
<dbReference type="Proteomes" id="UP000001510">
    <property type="component" value="Chromosome"/>
</dbReference>
<dbReference type="GO" id="GO:0022625">
    <property type="term" value="C:cytosolic large ribosomal subunit"/>
    <property type="evidence" value="ECO:0007669"/>
    <property type="project" value="TreeGrafter"/>
</dbReference>
<dbReference type="GO" id="GO:0070180">
    <property type="term" value="F:large ribosomal subunit rRNA binding"/>
    <property type="evidence" value="ECO:0007669"/>
    <property type="project" value="UniProtKB-UniRule"/>
</dbReference>
<dbReference type="GO" id="GO:0003735">
    <property type="term" value="F:structural constituent of ribosome"/>
    <property type="evidence" value="ECO:0007669"/>
    <property type="project" value="InterPro"/>
</dbReference>
<dbReference type="GO" id="GO:0006412">
    <property type="term" value="P:translation"/>
    <property type="evidence" value="ECO:0007669"/>
    <property type="project" value="UniProtKB-UniRule"/>
</dbReference>
<dbReference type="CDD" id="cd00349">
    <property type="entry name" value="Ribosomal_L11"/>
    <property type="match status" value="1"/>
</dbReference>
<dbReference type="FunFam" id="1.10.10.250:FF:000001">
    <property type="entry name" value="50S ribosomal protein L11"/>
    <property type="match status" value="1"/>
</dbReference>
<dbReference type="FunFam" id="3.30.1550.10:FF:000001">
    <property type="entry name" value="50S ribosomal protein L11"/>
    <property type="match status" value="1"/>
</dbReference>
<dbReference type="Gene3D" id="1.10.10.250">
    <property type="entry name" value="Ribosomal protein L11, C-terminal domain"/>
    <property type="match status" value="1"/>
</dbReference>
<dbReference type="Gene3D" id="3.30.1550.10">
    <property type="entry name" value="Ribosomal protein L11/L12, N-terminal domain"/>
    <property type="match status" value="1"/>
</dbReference>
<dbReference type="HAMAP" id="MF_00736">
    <property type="entry name" value="Ribosomal_uL11"/>
    <property type="match status" value="1"/>
</dbReference>
<dbReference type="InterPro" id="IPR000911">
    <property type="entry name" value="Ribosomal_uL11"/>
</dbReference>
<dbReference type="InterPro" id="IPR006519">
    <property type="entry name" value="Ribosomal_uL11_bac-typ"/>
</dbReference>
<dbReference type="InterPro" id="IPR020783">
    <property type="entry name" value="Ribosomal_uL11_C"/>
</dbReference>
<dbReference type="InterPro" id="IPR036769">
    <property type="entry name" value="Ribosomal_uL11_C_sf"/>
</dbReference>
<dbReference type="InterPro" id="IPR020785">
    <property type="entry name" value="Ribosomal_uL11_CS"/>
</dbReference>
<dbReference type="InterPro" id="IPR020784">
    <property type="entry name" value="Ribosomal_uL11_N"/>
</dbReference>
<dbReference type="InterPro" id="IPR036796">
    <property type="entry name" value="Ribosomal_uL11_N_sf"/>
</dbReference>
<dbReference type="NCBIfam" id="TIGR01632">
    <property type="entry name" value="L11_bact"/>
    <property type="match status" value="1"/>
</dbReference>
<dbReference type="PANTHER" id="PTHR11661">
    <property type="entry name" value="60S RIBOSOMAL PROTEIN L12"/>
    <property type="match status" value="1"/>
</dbReference>
<dbReference type="PANTHER" id="PTHR11661:SF1">
    <property type="entry name" value="LARGE RIBOSOMAL SUBUNIT PROTEIN UL11M"/>
    <property type="match status" value="1"/>
</dbReference>
<dbReference type="Pfam" id="PF00298">
    <property type="entry name" value="Ribosomal_L11"/>
    <property type="match status" value="1"/>
</dbReference>
<dbReference type="Pfam" id="PF03946">
    <property type="entry name" value="Ribosomal_L11_N"/>
    <property type="match status" value="1"/>
</dbReference>
<dbReference type="SMART" id="SM00649">
    <property type="entry name" value="RL11"/>
    <property type="match status" value="1"/>
</dbReference>
<dbReference type="SUPFAM" id="SSF54747">
    <property type="entry name" value="Ribosomal L11/L12e N-terminal domain"/>
    <property type="match status" value="1"/>
</dbReference>
<dbReference type="SUPFAM" id="SSF46906">
    <property type="entry name" value="Ribosomal protein L11, C-terminal domain"/>
    <property type="match status" value="1"/>
</dbReference>
<dbReference type="PROSITE" id="PS00359">
    <property type="entry name" value="RIBOSOMAL_L11"/>
    <property type="match status" value="1"/>
</dbReference>
<name>RL11_MICAN</name>
<sequence length="141" mass="15000">MAKKVVAIIKLALPAGKANPAPPVGPALGQHGVNIMAFCKDYNAKTADQAGMIIPVEISVFEDRSFTFVLKTPPASVLIRKAAGVERGSNEPNKKFVATITRDQLREIAQTKMPDLNANDIEAAMNIVAGTARNMGVKISD</sequence>
<accession>B0JNQ4</accession>
<protein>
    <recommendedName>
        <fullName evidence="1">Large ribosomal subunit protein uL11</fullName>
    </recommendedName>
    <alternativeName>
        <fullName evidence="2">50S ribosomal protein L11</fullName>
    </alternativeName>
</protein>
<proteinExistence type="inferred from homology"/>
<keyword id="KW-0488">Methylation</keyword>
<keyword id="KW-0687">Ribonucleoprotein</keyword>
<keyword id="KW-0689">Ribosomal protein</keyword>
<keyword id="KW-0694">RNA-binding</keyword>
<keyword id="KW-0699">rRNA-binding</keyword>